<name>HYEP_HUMAN</name>
<proteinExistence type="evidence at protein level"/>
<dbReference type="EC" id="3.3.2.9" evidence="1"/>
<dbReference type="EMBL" id="J03518">
    <property type="protein sequence ID" value="AAA61305.1"/>
    <property type="molecule type" value="mRNA"/>
</dbReference>
<dbReference type="EMBL" id="X07936">
    <property type="protein sequence ID" value="CAA30759.1"/>
    <property type="molecule type" value="mRNA"/>
</dbReference>
<dbReference type="EMBL" id="Y00424">
    <property type="protein sequence ID" value="CAA68486.1"/>
    <property type="molecule type" value="mRNA"/>
</dbReference>
<dbReference type="EMBL" id="L25878">
    <property type="protein sequence ID" value="AAA52389.1"/>
    <property type="molecule type" value="mRNA"/>
</dbReference>
<dbReference type="EMBL" id="L25879">
    <property type="protein sequence ID" value="AAA52390.1"/>
    <property type="molecule type" value="mRNA"/>
</dbReference>
<dbReference type="EMBL" id="U06661">
    <property type="protein sequence ID" value="AAB60649.1"/>
    <property type="molecule type" value="Genomic_DNA"/>
</dbReference>
<dbReference type="EMBL" id="U06656">
    <property type="protein sequence ID" value="AAB60649.1"/>
    <property type="status" value="JOINED"/>
    <property type="molecule type" value="Genomic_DNA"/>
</dbReference>
<dbReference type="EMBL" id="U06657">
    <property type="protein sequence ID" value="AAB60649.1"/>
    <property type="status" value="JOINED"/>
    <property type="molecule type" value="Genomic_DNA"/>
</dbReference>
<dbReference type="EMBL" id="U06658">
    <property type="protein sequence ID" value="AAB60649.1"/>
    <property type="status" value="JOINED"/>
    <property type="molecule type" value="Genomic_DNA"/>
</dbReference>
<dbReference type="EMBL" id="U06659">
    <property type="protein sequence ID" value="AAB60649.1"/>
    <property type="status" value="JOINED"/>
    <property type="molecule type" value="Genomic_DNA"/>
</dbReference>
<dbReference type="EMBL" id="U06660">
    <property type="protein sequence ID" value="AAB60649.1"/>
    <property type="status" value="JOINED"/>
    <property type="molecule type" value="Genomic_DNA"/>
</dbReference>
<dbReference type="EMBL" id="AK313436">
    <property type="protein sequence ID" value="BAG36227.1"/>
    <property type="molecule type" value="mRNA"/>
</dbReference>
<dbReference type="EMBL" id="AY948961">
    <property type="protein sequence ID" value="AAX81410.1"/>
    <property type="molecule type" value="Genomic_DNA"/>
</dbReference>
<dbReference type="EMBL" id="AL591895">
    <property type="status" value="NOT_ANNOTATED_CDS"/>
    <property type="molecule type" value="Genomic_DNA"/>
</dbReference>
<dbReference type="EMBL" id="BC003567">
    <property type="protein sequence ID" value="AAH03567.1"/>
    <property type="molecule type" value="mRNA"/>
</dbReference>
<dbReference type="EMBL" id="BC008291">
    <property type="protein sequence ID" value="AAH08291.1"/>
    <property type="molecule type" value="mRNA"/>
</dbReference>
<dbReference type="EMBL" id="BC095430">
    <property type="protein sequence ID" value="AAH95430.1"/>
    <property type="molecule type" value="mRNA"/>
</dbReference>
<dbReference type="EMBL" id="M36374">
    <property type="protein sequence ID" value="AAA59580.1"/>
    <property type="molecule type" value="mRNA"/>
</dbReference>
<dbReference type="EMBL" id="AF253417">
    <property type="protein sequence ID" value="AAC41694.1"/>
    <property type="molecule type" value="Genomic_DNA"/>
</dbReference>
<dbReference type="EMBL" id="AF276626">
    <property type="protein sequence ID" value="AAF87726.1"/>
    <property type="molecule type" value="Genomic_DNA"/>
</dbReference>
<dbReference type="EMBL" id="AF276627">
    <property type="protein sequence ID" value="AAF87727.1"/>
    <property type="molecule type" value="Genomic_DNA"/>
</dbReference>
<dbReference type="EMBL" id="AF276628">
    <property type="protein sequence ID" value="AAF87728.1"/>
    <property type="molecule type" value="Genomic_DNA"/>
</dbReference>
<dbReference type="EMBL" id="AF276629">
    <property type="protein sequence ID" value="AAF87729.1"/>
    <property type="molecule type" value="Genomic_DNA"/>
</dbReference>
<dbReference type="EMBL" id="AF276630">
    <property type="protein sequence ID" value="AAF87730.1"/>
    <property type="molecule type" value="Genomic_DNA"/>
</dbReference>
<dbReference type="EMBL" id="AF276631">
    <property type="protein sequence ID" value="AAF87731.1"/>
    <property type="molecule type" value="Genomic_DNA"/>
</dbReference>
<dbReference type="EMBL" id="AF276632">
    <property type="protein sequence ID" value="AAF87732.1"/>
    <property type="molecule type" value="Genomic_DNA"/>
</dbReference>
<dbReference type="EMBL" id="AF276633">
    <property type="protein sequence ID" value="AAF87733.1"/>
    <property type="molecule type" value="Genomic_DNA"/>
</dbReference>
<dbReference type="EMBL" id="AF276634">
    <property type="protein sequence ID" value="AAF87734.1"/>
    <property type="molecule type" value="Genomic_DNA"/>
</dbReference>
<dbReference type="EMBL" id="AF276635">
    <property type="protein sequence ID" value="AAF87735.1"/>
    <property type="molecule type" value="Genomic_DNA"/>
</dbReference>
<dbReference type="EMBL" id="AF276636">
    <property type="protein sequence ID" value="AAF87736.1"/>
    <property type="molecule type" value="Genomic_DNA"/>
</dbReference>
<dbReference type="EMBL" id="AF276637">
    <property type="protein sequence ID" value="AAF87737.1"/>
    <property type="molecule type" value="Genomic_DNA"/>
</dbReference>
<dbReference type="EMBL" id="AF276638">
    <property type="protein sequence ID" value="AAF87738.1"/>
    <property type="molecule type" value="Genomic_DNA"/>
</dbReference>
<dbReference type="CCDS" id="CCDS1547.1"/>
<dbReference type="PIR" id="A29939">
    <property type="entry name" value="A29939"/>
</dbReference>
<dbReference type="RefSeq" id="NP_000111.1">
    <property type="nucleotide sequence ID" value="NM_000120.4"/>
</dbReference>
<dbReference type="RefSeq" id="NP_001129490.1">
    <property type="nucleotide sequence ID" value="NM_001136018.4"/>
</dbReference>
<dbReference type="RefSeq" id="NP_001278092.1">
    <property type="nucleotide sequence ID" value="NM_001291163.2"/>
</dbReference>
<dbReference type="RefSeq" id="NP_001365355.1">
    <property type="nucleotide sequence ID" value="NM_001378426.1"/>
</dbReference>
<dbReference type="RefSeq" id="NP_001365356.1">
    <property type="nucleotide sequence ID" value="NM_001378427.1"/>
</dbReference>
<dbReference type="SMR" id="P07099"/>
<dbReference type="BioGRID" id="108366">
    <property type="interactions" value="149"/>
</dbReference>
<dbReference type="FunCoup" id="P07099">
    <property type="interactions" value="775"/>
</dbReference>
<dbReference type="IntAct" id="P07099">
    <property type="interactions" value="56"/>
</dbReference>
<dbReference type="MINT" id="P07099"/>
<dbReference type="STRING" id="9606.ENSP00000480004"/>
<dbReference type="BindingDB" id="P07099"/>
<dbReference type="ChEMBL" id="CHEMBL1968"/>
<dbReference type="DrugBank" id="DB00808">
    <property type="generic name" value="Indapamide"/>
</dbReference>
<dbReference type="DrugBank" id="DB00252">
    <property type="generic name" value="Phenytoin"/>
</dbReference>
<dbReference type="DrugCentral" id="P07099"/>
<dbReference type="SwissLipids" id="SLP:000001117"/>
<dbReference type="ESTHER" id="human-EPHX1">
    <property type="family name" value="Epoxide_hydrolase"/>
</dbReference>
<dbReference type="MEROPS" id="S33.971"/>
<dbReference type="GlyGen" id="P07099">
    <property type="glycosylation" value="1 site, 1 O-linked glycan (1 site)"/>
</dbReference>
<dbReference type="iPTMnet" id="P07099"/>
<dbReference type="PhosphoSitePlus" id="P07099"/>
<dbReference type="SwissPalm" id="P07099"/>
<dbReference type="BioMuta" id="EPHX1"/>
<dbReference type="DMDM" id="123926"/>
<dbReference type="CPTAC" id="CPTAC-1613"/>
<dbReference type="CPTAC" id="CPTAC-359"/>
<dbReference type="CPTAC" id="CPTAC-360"/>
<dbReference type="jPOST" id="P07099"/>
<dbReference type="MassIVE" id="P07099"/>
<dbReference type="PaxDb" id="9606-ENSP00000480004"/>
<dbReference type="PeptideAtlas" id="P07099"/>
<dbReference type="ProteomicsDB" id="51949"/>
<dbReference type="Pumba" id="P07099"/>
<dbReference type="Antibodypedia" id="34646">
    <property type="antibodies" value="454 antibodies from 30 providers"/>
</dbReference>
<dbReference type="DNASU" id="2052"/>
<dbReference type="Ensembl" id="ENST00000272167.10">
    <property type="protein sequence ID" value="ENSP00000272167.5"/>
    <property type="gene ID" value="ENSG00000143819.13"/>
</dbReference>
<dbReference type="Ensembl" id="ENST00000366837.5">
    <property type="protein sequence ID" value="ENSP00000355802.4"/>
    <property type="gene ID" value="ENSG00000143819.13"/>
</dbReference>
<dbReference type="Ensembl" id="ENST00000614058.4">
    <property type="protein sequence ID" value="ENSP00000480004.1"/>
    <property type="gene ID" value="ENSG00000143819.13"/>
</dbReference>
<dbReference type="GeneID" id="2052"/>
<dbReference type="KEGG" id="hsa:2052"/>
<dbReference type="MANE-Select" id="ENST00000272167.10">
    <property type="protein sequence ID" value="ENSP00000272167.5"/>
    <property type="RefSeq nucleotide sequence ID" value="NM_001136018.4"/>
    <property type="RefSeq protein sequence ID" value="NP_001129490.1"/>
</dbReference>
<dbReference type="AGR" id="HGNC:3401"/>
<dbReference type="CTD" id="2052"/>
<dbReference type="DisGeNET" id="2052"/>
<dbReference type="GeneCards" id="EPHX1"/>
<dbReference type="HGNC" id="HGNC:3401">
    <property type="gene designation" value="EPHX1"/>
</dbReference>
<dbReference type="HPA" id="ENSG00000143819">
    <property type="expression patterns" value="Tissue enhanced (adrenal gland, liver)"/>
</dbReference>
<dbReference type="MalaCards" id="EPHX1"/>
<dbReference type="MIM" id="132810">
    <property type="type" value="gene"/>
</dbReference>
<dbReference type="neXtProt" id="NX_P07099"/>
<dbReference type="OpenTargets" id="ENSG00000143819"/>
<dbReference type="Orphanet" id="238475">
    <property type="disease" value="Familial hypercholanemia"/>
</dbReference>
<dbReference type="PharmGKB" id="PA27829"/>
<dbReference type="VEuPathDB" id="HostDB:ENSG00000143819"/>
<dbReference type="eggNOG" id="KOG2565">
    <property type="taxonomic scope" value="Eukaryota"/>
</dbReference>
<dbReference type="GeneTree" id="ENSGT00390000002210"/>
<dbReference type="HOGENOM" id="CLU_019414_3_0_1"/>
<dbReference type="InParanoid" id="P07099"/>
<dbReference type="OMA" id="WVKQKYH"/>
<dbReference type="OrthoDB" id="7130006at2759"/>
<dbReference type="PAN-GO" id="P07099">
    <property type="GO annotations" value="3 GO annotations based on evolutionary models"/>
</dbReference>
<dbReference type="PhylomeDB" id="P07099"/>
<dbReference type="TreeFam" id="TF313813"/>
<dbReference type="BioCyc" id="MetaCyc:HS07112-MONOMER"/>
<dbReference type="BRENDA" id="3.3.2.9">
    <property type="organism ID" value="2681"/>
</dbReference>
<dbReference type="PathwayCommons" id="P07099"/>
<dbReference type="Reactome" id="R-HSA-211945">
    <property type="pathway name" value="Phase I - Functionalization of compounds"/>
</dbReference>
<dbReference type="SABIO-RK" id="P07099"/>
<dbReference type="SignaLink" id="P07099"/>
<dbReference type="BioGRID-ORCS" id="2052">
    <property type="hits" value="18 hits in 1161 CRISPR screens"/>
</dbReference>
<dbReference type="ChiTaRS" id="EPHX1">
    <property type="organism name" value="human"/>
</dbReference>
<dbReference type="GeneWiki" id="EPHX1"/>
<dbReference type="GenomeRNAi" id="2052"/>
<dbReference type="Pharos" id="P07099">
    <property type="development level" value="Tchem"/>
</dbReference>
<dbReference type="PRO" id="PR:P07099"/>
<dbReference type="Proteomes" id="UP000005640">
    <property type="component" value="Chromosome 1"/>
</dbReference>
<dbReference type="RNAct" id="P07099">
    <property type="molecule type" value="protein"/>
</dbReference>
<dbReference type="Bgee" id="ENSG00000143819">
    <property type="expression patterns" value="Expressed in right adrenal gland cortex and 186 other cell types or tissues"/>
</dbReference>
<dbReference type="ExpressionAtlas" id="P07099">
    <property type="expression patterns" value="baseline and differential"/>
</dbReference>
<dbReference type="GO" id="GO:0005789">
    <property type="term" value="C:endoplasmic reticulum membrane"/>
    <property type="evidence" value="ECO:0000304"/>
    <property type="project" value="Reactome"/>
</dbReference>
<dbReference type="GO" id="GO:0033961">
    <property type="term" value="F:cis-stilbene-oxide hydrolase activity"/>
    <property type="evidence" value="ECO:0000314"/>
    <property type="project" value="UniProtKB"/>
</dbReference>
<dbReference type="GO" id="GO:0004301">
    <property type="term" value="F:epoxide hydrolase activity"/>
    <property type="evidence" value="ECO:0000314"/>
    <property type="project" value="UniProtKB"/>
</dbReference>
<dbReference type="GO" id="GO:0008142">
    <property type="term" value="F:oxysterol binding"/>
    <property type="evidence" value="ECO:0000250"/>
    <property type="project" value="UniProtKB"/>
</dbReference>
<dbReference type="GO" id="GO:0019369">
    <property type="term" value="P:arachidonate metabolic process"/>
    <property type="evidence" value="ECO:0000314"/>
    <property type="project" value="UniProtKB"/>
</dbReference>
<dbReference type="GO" id="GO:0097176">
    <property type="term" value="P:epoxide metabolic process"/>
    <property type="evidence" value="ECO:0000314"/>
    <property type="project" value="UniProtKB"/>
</dbReference>
<dbReference type="GO" id="GO:0120253">
    <property type="term" value="P:hydrocarbon catabolic process"/>
    <property type="evidence" value="ECO:0007669"/>
    <property type="project" value="Ensembl"/>
</dbReference>
<dbReference type="GO" id="GO:0009636">
    <property type="term" value="P:response to toxic substance"/>
    <property type="evidence" value="ECO:0007669"/>
    <property type="project" value="UniProtKB-KW"/>
</dbReference>
<dbReference type="GO" id="GO:0006805">
    <property type="term" value="P:xenobiotic metabolic process"/>
    <property type="evidence" value="ECO:0000304"/>
    <property type="project" value="Reactome"/>
</dbReference>
<dbReference type="FunFam" id="3.40.50.1820:FF:000172">
    <property type="entry name" value="Epoxide hydrolase"/>
    <property type="match status" value="1"/>
</dbReference>
<dbReference type="Gene3D" id="3.40.50.1820">
    <property type="entry name" value="alpha/beta hydrolase"/>
    <property type="match status" value="1"/>
</dbReference>
<dbReference type="InterPro" id="IPR000073">
    <property type="entry name" value="AB_hydrolase_1"/>
</dbReference>
<dbReference type="InterPro" id="IPR029058">
    <property type="entry name" value="AB_hydrolase_fold"/>
</dbReference>
<dbReference type="InterPro" id="IPR000639">
    <property type="entry name" value="Epox_hydrolase-like"/>
</dbReference>
<dbReference type="InterPro" id="IPR016292">
    <property type="entry name" value="Epoxide_hydrolase"/>
</dbReference>
<dbReference type="PANTHER" id="PTHR21661:SF78">
    <property type="entry name" value="EPOXIDE HYDROLASE 1"/>
    <property type="match status" value="1"/>
</dbReference>
<dbReference type="PANTHER" id="PTHR21661">
    <property type="entry name" value="EPOXIDE HYDROLASE 1-RELATED"/>
    <property type="match status" value="1"/>
</dbReference>
<dbReference type="Pfam" id="PF00561">
    <property type="entry name" value="Abhydrolase_1"/>
    <property type="match status" value="1"/>
</dbReference>
<dbReference type="PIRSF" id="PIRSF001112">
    <property type="entry name" value="Epoxide_hydrolase"/>
    <property type="match status" value="1"/>
</dbReference>
<dbReference type="PRINTS" id="PR00412">
    <property type="entry name" value="EPOXHYDRLASE"/>
</dbReference>
<dbReference type="SUPFAM" id="SSF53474">
    <property type="entry name" value="alpha/beta-Hydrolases"/>
    <property type="match status" value="1"/>
</dbReference>
<sequence length="455" mass="52949">MWLEILLTSVLGFAIYWFISRDKEETLPLEDGWWGPGTRSAAREDDSIRPFKVETSDEEIHDLHQRIDKFRFTPPLEDSCFHYGFNSNYLKKVISYWRNEFDWKKQVEILNRYPHFKTKIEGLDIHFIHVKPPQLPAGHTPKPLLMVHGWPGSFYEFYKIIPLLTDPKNHGLSDEHVFEVICPSIPGYGFSEASSKKGFNSVATARIFYKLMLRLGFQEFYIQGGDWGSLICTNMAQLVPSHVKGLHLNMALVLSNFSTLTLLLGQRFGRFLGLTERDVELLYPVKEKVFYSLMRESGYMHIQCTKPDTVGSALNDSPVGLAAYILEKFSTWTNTEFRYLEDGGLERKFSLDDLLTNVMLYWTTGTIISSQRFYKENLGQGWMTQKHERMKVYVPTGFSAFPFELLHTPEKWVRFKYPKLISYSYMVRGGHFAAFEEPELLAQDIRKFLSVLERQ</sequence>
<feature type="chain" id="PRO_0000080855" description="Epoxide hydrolase 1">
    <location>
        <begin position="1"/>
        <end position="455"/>
    </location>
</feature>
<feature type="transmembrane region" description="Helical; Signal-anchor for type III membrane protein" evidence="1">
    <location>
        <begin position="1"/>
        <end position="21"/>
    </location>
</feature>
<feature type="topological domain" description="Cytoplasmic" evidence="1">
    <location>
        <begin position="22"/>
        <end position="455"/>
    </location>
</feature>
<feature type="active site" description="Nucleophile" evidence="1">
    <location>
        <position position="226"/>
    </location>
</feature>
<feature type="active site" description="Proton donor" evidence="2">
    <location>
        <position position="374"/>
    </location>
</feature>
<feature type="active site" description="Proton acceptor" evidence="1">
    <location>
        <position position="431"/>
    </location>
</feature>
<feature type="modified residue" description="Dimethylated arginine" evidence="1">
    <location>
        <position position="295"/>
    </location>
</feature>
<feature type="sequence variant" id="VAR_023303" description="In dbSNP:rs3738046." evidence="13">
    <original>R</original>
    <variation>T</variation>
    <location>
        <position position="43"/>
    </location>
</feature>
<feature type="sequence variant" id="VAR_018347" description="In dbSNP:rs745306359." evidence="9">
    <original>E</original>
    <variation>Q</variation>
    <location>
        <position position="44"/>
    </location>
</feature>
<feature type="sequence variant" id="VAR_013298" description="In allele EPHX1*2; dbSNP:rs2234697." evidence="5">
    <original>R</original>
    <variation>C</variation>
    <location>
        <position position="49"/>
    </location>
</feature>
<feature type="sequence variant" id="VAR_005295" description="In allele EPHX1*3; benign; frequent in the human population; 55% of wild type enzyme activity; dbSNP:rs1051740." evidence="5 6 8 12 13">
    <original>Y</original>
    <variation>H</variation>
    <location>
        <position position="113"/>
    </location>
</feature>
<feature type="sequence variant" id="VAR_005296" description="In allele EPHX1*4; benign; frequent in the human population; 62% of wild type enzyme activity; dbSNP:rs2234922." evidence="5 6 8 12 13">
    <original>H</original>
    <variation>R</variation>
    <location>
        <position position="139"/>
    </location>
</feature>
<feature type="sequence variant" id="VAR_013299" description="In allele EPHX1*1G." evidence="5">
    <original>L</original>
    <variation>P</variation>
    <location>
        <position position="260"/>
    </location>
</feature>
<feature type="sequence variant" id="VAR_051828" description="In dbSNP:rs35073925.">
    <original>T</original>
    <variation>A</variation>
    <location>
        <position position="275"/>
    </location>
</feature>
<feature type="sequence variant" id="VAR_023304" description="In dbSNP:rs45449793." evidence="13">
    <original>V</original>
    <variation>L</variation>
    <location>
        <position position="285"/>
    </location>
</feature>
<feature type="sequence variant" id="VAR_005297" description="Either a rare variant or a sequencing error." evidence="12">
    <original>T</original>
    <variation>I</variation>
    <location>
        <position position="396"/>
    </location>
</feature>
<feature type="sequence variant" id="VAR_023305" description="In dbSNP:rs45495897." evidence="13">
    <original>T</original>
    <variation>M</variation>
    <location>
        <position position="408"/>
    </location>
</feature>
<feature type="sequence variant" id="VAR_023306" description="In dbSNP:rs45563137." evidence="13">
    <original>L</original>
    <variation>Q</variation>
    <location>
        <position position="452"/>
    </location>
</feature>
<feature type="sequence variant" id="VAR_013300" description="In allele EPHX1*5; dbSNP:rs2234701." evidence="5">
    <original>R</original>
    <variation>Q</variation>
    <location>
        <position position="454"/>
    </location>
</feature>
<feature type="sequence conflict" description="In Ref. 7; BAG36227." evidence="14" ref="7">
    <original>I</original>
    <variation>V</variation>
    <location>
        <position position="15"/>
    </location>
</feature>
<feature type="sequence conflict" description="In Ref. 11." evidence="14" ref="11">
    <original>R</original>
    <variation>K</variation>
    <location>
        <position position="112"/>
    </location>
</feature>
<feature type="sequence conflict" description="In Ref. 3 and 11." evidence="14" ref="3 11">
    <original>H</original>
    <variation>N</variation>
    <location>
        <position position="148"/>
    </location>
</feature>
<feature type="sequence conflict" description="In Ref. 11." evidence="14" ref="11">
    <original>V</original>
    <variation>L</variation>
    <location>
        <position position="243"/>
    </location>
</feature>
<feature type="sequence conflict" description="In Ref. 3; CAA68486." evidence="14" ref="3">
    <original>K</original>
    <variation>S</variation>
    <location>
        <position position="348"/>
    </location>
</feature>
<feature type="sequence conflict" description="In Ref. 3; CAA68486." evidence="14" ref="3">
    <original>L</original>
    <variation>F</variation>
    <location>
        <position position="406"/>
    </location>
</feature>
<feature type="sequence conflict" description="In Ref. 3; CAA68486." evidence="14" ref="3">
    <original>L</original>
    <variation>V</variation>
    <location>
        <position position="420"/>
    </location>
</feature>
<keyword id="KW-0058">Aromatic hydrocarbons catabolism</keyword>
<keyword id="KW-0216">Detoxification</keyword>
<keyword id="KW-0903">Direct protein sequencing</keyword>
<keyword id="KW-0256">Endoplasmic reticulum</keyword>
<keyword id="KW-0378">Hydrolase</keyword>
<keyword id="KW-0443">Lipid metabolism</keyword>
<keyword id="KW-0472">Membrane</keyword>
<keyword id="KW-0488">Methylation</keyword>
<keyword id="KW-0492">Microsome</keyword>
<keyword id="KW-1267">Proteomics identification</keyword>
<keyword id="KW-1185">Reference proteome</keyword>
<keyword id="KW-0812">Transmembrane</keyword>
<keyword id="KW-1133">Transmembrane helix</keyword>
<organism>
    <name type="scientific">Homo sapiens</name>
    <name type="common">Human</name>
    <dbReference type="NCBI Taxonomy" id="9606"/>
    <lineage>
        <taxon>Eukaryota</taxon>
        <taxon>Metazoa</taxon>
        <taxon>Chordata</taxon>
        <taxon>Craniata</taxon>
        <taxon>Vertebrata</taxon>
        <taxon>Euteleostomi</taxon>
        <taxon>Mammalia</taxon>
        <taxon>Eutheria</taxon>
        <taxon>Euarchontoglires</taxon>
        <taxon>Primates</taxon>
        <taxon>Haplorrhini</taxon>
        <taxon>Catarrhini</taxon>
        <taxon>Hominidae</taxon>
        <taxon>Homo</taxon>
    </lineage>
</organism>
<accession>P07099</accession>
<accession>B2R8N0</accession>
<accession>Q5VTJ6</accession>
<accession>Q9NP75</accession>
<accession>Q9NPE7</accession>
<accession>Q9NQU6</accession>
<accession>Q9NQU7</accession>
<accession>Q9NQU8</accession>
<accession>Q9NQU9</accession>
<accession>Q9NQV0</accession>
<accession>Q9NQV1</accession>
<accession>Q9NQV2</accession>
<evidence type="ECO:0000250" key="1">
    <source>
        <dbReference type="UniProtKB" id="P07687"/>
    </source>
</evidence>
<evidence type="ECO:0000250" key="2">
    <source>
        <dbReference type="UniProtKB" id="P34913"/>
    </source>
</evidence>
<evidence type="ECO:0000250" key="3">
    <source>
        <dbReference type="UniProtKB" id="Q9D379"/>
    </source>
</evidence>
<evidence type="ECO:0000255" key="4"/>
<evidence type="ECO:0000269" key="5">
    <source>
    </source>
</evidence>
<evidence type="ECO:0000269" key="6">
    <source>
    </source>
</evidence>
<evidence type="ECO:0000269" key="7">
    <source>
    </source>
</evidence>
<evidence type="ECO:0000269" key="8">
    <source>
    </source>
</evidence>
<evidence type="ECO:0000269" key="9">
    <source>
    </source>
</evidence>
<evidence type="ECO:0000269" key="10">
    <source>
    </source>
</evidence>
<evidence type="ECO:0000269" key="11">
    <source>
    </source>
</evidence>
<evidence type="ECO:0000269" key="12">
    <source>
    </source>
</evidence>
<evidence type="ECO:0000269" key="13">
    <source ref="8"/>
</evidence>
<evidence type="ECO:0000305" key="14"/>
<evidence type="ECO:0000312" key="15">
    <source>
        <dbReference type="HGNC" id="HGNC:3401"/>
    </source>
</evidence>
<comment type="function">
    <text evidence="1 3 10 11">Biotransformation enzyme that catalyzes the hydrolysis of arene and aliphatic epoxides to less reactive and more water soluble dihydrodiols by the trans addition of water (By similarity). Plays a role in the metabolism of endogenous lipids such as epoxide-containing fatty acids (PubMed:22798687). Metabolizes the abundant endocannabinoid 2-arachidonoylglycerol (2-AG) to free arachidonic acid (AA) and glycerol (PubMed:24958911). Binds 20(S)-hydroxycholesterol (20(S)-OHC) (By similarity).</text>
</comment>
<comment type="catalytic activity">
    <reaction evidence="11">
        <text>cis-stilbene oxide + H2O = (1R,2R)-hydrobenzoin</text>
        <dbReference type="Rhea" id="RHEA:23900"/>
        <dbReference type="ChEBI" id="CHEBI:15377"/>
        <dbReference type="ChEBI" id="CHEBI:50004"/>
        <dbReference type="ChEBI" id="CHEBI:50014"/>
        <dbReference type="EC" id="3.3.2.9"/>
    </reaction>
    <physiologicalReaction direction="left-to-right" evidence="11">
        <dbReference type="Rhea" id="RHEA:23901"/>
    </physiologicalReaction>
</comment>
<comment type="catalytic activity">
    <reaction evidence="1">
        <text>1-(4-methoxyphenyl)-N-methyl-N-[(3-methyloxetan-3-yl)methyl]methanamine + H2O = 2-{[(4-methoxybenzyl)(methyl)amino]methyl}-2-methylpropane-1,3-diol</text>
        <dbReference type="Rhea" id="RHEA:55764"/>
        <dbReference type="ChEBI" id="CHEBI:15377"/>
        <dbReference type="ChEBI" id="CHEBI:139161"/>
        <dbReference type="ChEBI" id="CHEBI:139164"/>
        <dbReference type="EC" id="3.3.2.9"/>
    </reaction>
</comment>
<comment type="catalytic activity">
    <reaction evidence="10">
        <text>8,9-epoxy-(5Z,11Z,14Z)-eicosatrienoate + H2O = 8,9-dihydroxy-(5Z,11Z,14Z)-eicosatrienoate</text>
        <dbReference type="Rhea" id="RHEA:44048"/>
        <dbReference type="ChEBI" id="CHEBI:15377"/>
        <dbReference type="ChEBI" id="CHEBI:84025"/>
        <dbReference type="ChEBI" id="CHEBI:84032"/>
    </reaction>
    <physiologicalReaction direction="left-to-right" evidence="10">
        <dbReference type="Rhea" id="RHEA:44049"/>
    </physiologicalReaction>
</comment>
<comment type="catalytic activity">
    <reaction evidence="10">
        <text>11,12-epoxy-(5Z,8Z,14Z)-eicosatrienoate + H2O = 11,12-dihydroxy-(5Z,8Z,14Z)-eicosatrienoate</text>
        <dbReference type="Rhea" id="RHEA:44044"/>
        <dbReference type="ChEBI" id="CHEBI:15377"/>
        <dbReference type="ChEBI" id="CHEBI:76625"/>
        <dbReference type="ChEBI" id="CHEBI:84031"/>
    </reaction>
    <physiologicalReaction direction="left-to-right" evidence="10">
        <dbReference type="Rhea" id="RHEA:44045"/>
    </physiologicalReaction>
</comment>
<comment type="catalytic activity">
    <reaction evidence="11">
        <text>2-(5Z,8Z,11Z,14Z-eicosatetraenoyl)-glycerol + H2O = glycerol + (5Z,8Z,11Z,14Z)-eicosatetraenoate + H(+)</text>
        <dbReference type="Rhea" id="RHEA:26132"/>
        <dbReference type="ChEBI" id="CHEBI:15377"/>
        <dbReference type="ChEBI" id="CHEBI:15378"/>
        <dbReference type="ChEBI" id="CHEBI:17754"/>
        <dbReference type="ChEBI" id="CHEBI:32395"/>
        <dbReference type="ChEBI" id="CHEBI:52392"/>
    </reaction>
    <physiologicalReaction direction="left-to-right" evidence="11">
        <dbReference type="Rhea" id="RHEA:26133"/>
    </physiologicalReaction>
</comment>
<comment type="activity regulation">
    <text evidence="11">Inhibited by 10-hydroxystearamide and methoxy-arachidonyl fluorophosphate.</text>
</comment>
<comment type="biophysicochemical properties">
    <kinetics>
        <KM evidence="10">0.8 uM for 8,9-EET</KM>
        <KM evidence="10">0.4 uM for 11,12-EET</KM>
        <KM evidence="10">0.9 uM for 14,15-EET</KM>
        <KM evidence="10">5.8 uM for leukotoxin</KM>
        <Vmax evidence="10">0.12 umol/min/mg enzyme with 8,9-EET as substrate</Vmax>
        <Vmax evidence="10">0.6 umol/min/mg enzyme with 11,12-EET as substrate</Vmax>
        <Vmax evidence="10">0.04 umol/min/mg enzyme with 14,15-EET as substrate</Vmax>
        <Vmax evidence="10">0.008 umol/min/mg enzyme with leukotoxin as substrate</Vmax>
    </kinetics>
</comment>
<comment type="interaction">
    <interactant intactId="EBI-6138796">
        <id>P07099</id>
    </interactant>
    <interactant intactId="EBI-12275524">
        <id>P23560-2</id>
        <label>BDNF</label>
    </interactant>
    <organismsDiffer>false</organismsDiffer>
    <experiments>3</experiments>
</comment>
<comment type="interaction">
    <interactant intactId="EBI-6138796">
        <id>P07099</id>
    </interactant>
    <interactant intactId="EBI-349854">
        <id>P13569</id>
        <label>CFTR</label>
    </interactant>
    <organismsDiffer>false</organismsDiffer>
    <experiments>5</experiments>
</comment>
<comment type="subcellular location">
    <subcellularLocation>
        <location evidence="11">Microsome membrane</location>
        <topology evidence="4">Single-pass type III membrane protein</topology>
    </subcellularLocation>
    <subcellularLocation>
        <location evidence="1">Endoplasmic reticulum membrane</location>
        <topology evidence="1">Single-pass type III membrane protein</topology>
    </subcellularLocation>
</comment>
<comment type="tissue specificity">
    <text evidence="7">Found in liver.</text>
</comment>
<comment type="disease">
    <text evidence="6">In some populations, the high activity haplotype tyr113/his139 is overrepresented among women suffering from pregnancy-induced hypertension (pre-eclampsia) when compared with healthy controls.</text>
</comment>
<comment type="disease">
    <text evidence="7">Variations in EPHX1 gene non-coding regions have been observed in a patient with hypercholanemia. The pathogenicity of these variants has not been confirmed.</text>
</comment>
<comment type="similarity">
    <text evidence="14">Belongs to the peptidase S33 family.</text>
</comment>
<reference key="1">
    <citation type="journal article" date="1988" name="J. Biol. Chem.">
        <title>Human microsomal xenobiotic epoxide hydrolase. Complementary DNA sequence, complementary DNA-directed expression in COS-1 cells, and chromosomal localization.</title>
        <authorList>
            <person name="Skoda R.C."/>
            <person name="Demierre A."/>
            <person name="McBride O.W."/>
            <person name="Gonzalez F.J."/>
            <person name="Meyer U.A."/>
        </authorList>
    </citation>
    <scope>NUCLEOTIDE SEQUENCE [MRNA]</scope>
    <scope>PROTEIN SEQUENCE OF 1-19</scope>
</reference>
<reference key="2">
    <citation type="submission" date="1988-07" db="EMBL/GenBank/DDBJ databases">
        <title>Nucleotide sequence of a human microsomal epoxide hydrolase cDNA clone.</title>
        <authorList>
            <person name="Wilson N.M."/>
            <person name="Omiecinski C.J."/>
        </authorList>
    </citation>
    <scope>NUCLEOTIDE SEQUENCE [MRNA]</scope>
    <source>
        <tissue>Fetal liver</tissue>
    </source>
</reference>
<reference key="3">
    <citation type="journal article" date="1987" name="Nucleic Acids Res.">
        <title>Nucleotide and deduced amino acid sequence of human liver microsomal epoxide hydrolase.</title>
        <authorList>
            <person name="Jackson M.R."/>
            <person name="Craft J.A."/>
            <person name="Burchell B."/>
        </authorList>
    </citation>
    <scope>NUCLEOTIDE SEQUENCE [MRNA]</scope>
    <source>
        <tissue>Liver</tissue>
    </source>
</reference>
<reference key="4">
    <citation type="journal article" date="1994" name="Hum. Mol. Genet.">
        <title>Human microsomal epoxide hydrolase: genetic polymorphism and functional expression in vitro of amino acid variants.</title>
        <authorList>
            <person name="Hassett C."/>
            <person name="Aicher L."/>
            <person name="Sidhu J.S."/>
            <person name="Omiecinski C.J."/>
        </authorList>
    </citation>
    <scope>NUCLEOTIDE SEQUENCE [MRNA]</scope>
    <scope>VARIANTS HIS-113; ARG-139 AND ILE-396</scope>
    <source>
        <tissue>Liver</tissue>
    </source>
</reference>
<reference key="5">
    <citation type="journal article" date="1994" name="Hum. Mol. Genet.">
        <authorList>
            <person name="Hassett C."/>
            <person name="Aicher L."/>
            <person name="Sidhu J.S."/>
            <person name="Omiecinski C.J."/>
        </authorList>
    </citation>
    <scope>ERRATUM OF PUBMED:7516776</scope>
</reference>
<reference key="6">
    <citation type="journal article" date="1994" name="Genomics">
        <title>The human microsomal epoxide hydrolase gene (EPHX1): complete nucleotide sequence and structural characterization.</title>
        <authorList>
            <person name="Hassett C."/>
            <person name="Robinson K.B."/>
            <person name="Beck N.B."/>
            <person name="Omiecinski C.J."/>
        </authorList>
    </citation>
    <scope>NUCLEOTIDE SEQUENCE [GENOMIC DNA]</scope>
</reference>
<reference key="7">
    <citation type="journal article" date="2004" name="Nat. Genet.">
        <title>Complete sequencing and characterization of 21,243 full-length human cDNAs.</title>
        <authorList>
            <person name="Ota T."/>
            <person name="Suzuki Y."/>
            <person name="Nishikawa T."/>
            <person name="Otsuki T."/>
            <person name="Sugiyama T."/>
            <person name="Irie R."/>
            <person name="Wakamatsu A."/>
            <person name="Hayashi K."/>
            <person name="Sato H."/>
            <person name="Nagai K."/>
            <person name="Kimura K."/>
            <person name="Makita H."/>
            <person name="Sekine M."/>
            <person name="Obayashi M."/>
            <person name="Nishi T."/>
            <person name="Shibahara T."/>
            <person name="Tanaka T."/>
            <person name="Ishii S."/>
            <person name="Yamamoto J."/>
            <person name="Saito K."/>
            <person name="Kawai Y."/>
            <person name="Isono Y."/>
            <person name="Nakamura Y."/>
            <person name="Nagahari K."/>
            <person name="Murakami K."/>
            <person name="Yasuda T."/>
            <person name="Iwayanagi T."/>
            <person name="Wagatsuma M."/>
            <person name="Shiratori A."/>
            <person name="Sudo H."/>
            <person name="Hosoiri T."/>
            <person name="Kaku Y."/>
            <person name="Kodaira H."/>
            <person name="Kondo H."/>
            <person name="Sugawara M."/>
            <person name="Takahashi M."/>
            <person name="Kanda K."/>
            <person name="Yokoi T."/>
            <person name="Furuya T."/>
            <person name="Kikkawa E."/>
            <person name="Omura Y."/>
            <person name="Abe K."/>
            <person name="Kamihara K."/>
            <person name="Katsuta N."/>
            <person name="Sato K."/>
            <person name="Tanikawa M."/>
            <person name="Yamazaki M."/>
            <person name="Ninomiya K."/>
            <person name="Ishibashi T."/>
            <person name="Yamashita H."/>
            <person name="Murakawa K."/>
            <person name="Fujimori K."/>
            <person name="Tanai H."/>
            <person name="Kimata M."/>
            <person name="Watanabe M."/>
            <person name="Hiraoka S."/>
            <person name="Chiba Y."/>
            <person name="Ishida S."/>
            <person name="Ono Y."/>
            <person name="Takiguchi S."/>
            <person name="Watanabe S."/>
            <person name="Yosida M."/>
            <person name="Hotuta T."/>
            <person name="Kusano J."/>
            <person name="Kanehori K."/>
            <person name="Takahashi-Fujii A."/>
            <person name="Hara H."/>
            <person name="Tanase T.-O."/>
            <person name="Nomura Y."/>
            <person name="Togiya S."/>
            <person name="Komai F."/>
            <person name="Hara R."/>
            <person name="Takeuchi K."/>
            <person name="Arita M."/>
            <person name="Imose N."/>
            <person name="Musashino K."/>
            <person name="Yuuki H."/>
            <person name="Oshima A."/>
            <person name="Sasaki N."/>
            <person name="Aotsuka S."/>
            <person name="Yoshikawa Y."/>
            <person name="Matsunawa H."/>
            <person name="Ichihara T."/>
            <person name="Shiohata N."/>
            <person name="Sano S."/>
            <person name="Moriya S."/>
            <person name="Momiyama H."/>
            <person name="Satoh N."/>
            <person name="Takami S."/>
            <person name="Terashima Y."/>
            <person name="Suzuki O."/>
            <person name="Nakagawa S."/>
            <person name="Senoh A."/>
            <person name="Mizoguchi H."/>
            <person name="Goto Y."/>
            <person name="Shimizu F."/>
            <person name="Wakebe H."/>
            <person name="Hishigaki H."/>
            <person name="Watanabe T."/>
            <person name="Sugiyama A."/>
            <person name="Takemoto M."/>
            <person name="Kawakami B."/>
            <person name="Yamazaki M."/>
            <person name="Watanabe K."/>
            <person name="Kumagai A."/>
            <person name="Itakura S."/>
            <person name="Fukuzumi Y."/>
            <person name="Fujimori Y."/>
            <person name="Komiyama M."/>
            <person name="Tashiro H."/>
            <person name="Tanigami A."/>
            <person name="Fujiwara T."/>
            <person name="Ono T."/>
            <person name="Yamada K."/>
            <person name="Fujii Y."/>
            <person name="Ozaki K."/>
            <person name="Hirao M."/>
            <person name="Ohmori Y."/>
            <person name="Kawabata A."/>
            <person name="Hikiji T."/>
            <person name="Kobatake N."/>
            <person name="Inagaki H."/>
            <person name="Ikema Y."/>
            <person name="Okamoto S."/>
            <person name="Okitani R."/>
            <person name="Kawakami T."/>
            <person name="Noguchi S."/>
            <person name="Itoh T."/>
            <person name="Shigeta K."/>
            <person name="Senba T."/>
            <person name="Matsumura K."/>
            <person name="Nakajima Y."/>
            <person name="Mizuno T."/>
            <person name="Morinaga M."/>
            <person name="Sasaki M."/>
            <person name="Togashi T."/>
            <person name="Oyama M."/>
            <person name="Hata H."/>
            <person name="Watanabe M."/>
            <person name="Komatsu T."/>
            <person name="Mizushima-Sugano J."/>
            <person name="Satoh T."/>
            <person name="Shirai Y."/>
            <person name="Takahashi Y."/>
            <person name="Nakagawa K."/>
            <person name="Okumura K."/>
            <person name="Nagase T."/>
            <person name="Nomura N."/>
            <person name="Kikuchi H."/>
            <person name="Masuho Y."/>
            <person name="Yamashita R."/>
            <person name="Nakai K."/>
            <person name="Yada T."/>
            <person name="Nakamura Y."/>
            <person name="Ohara O."/>
            <person name="Isogai T."/>
            <person name="Sugano S."/>
        </authorList>
    </citation>
    <scope>NUCLEOTIDE SEQUENCE [LARGE SCALE MRNA]</scope>
    <source>
        <tissue>Brain cortex</tissue>
    </source>
</reference>
<reference key="8">
    <citation type="submission" date="2005-03" db="EMBL/GenBank/DDBJ databases">
        <authorList>
            <consortium name="NIEHS SNPs program"/>
        </authorList>
    </citation>
    <scope>NUCLEOTIDE SEQUENCE [GENOMIC DNA]</scope>
    <scope>VARIANTS THR-43; HIS-113; ARG-139; LEU-285; MET-408 AND GLN-452</scope>
</reference>
<reference key="9">
    <citation type="journal article" date="2006" name="Nature">
        <title>The DNA sequence and biological annotation of human chromosome 1.</title>
        <authorList>
            <person name="Gregory S.G."/>
            <person name="Barlow K.F."/>
            <person name="McLay K.E."/>
            <person name="Kaul R."/>
            <person name="Swarbreck D."/>
            <person name="Dunham A."/>
            <person name="Scott C.E."/>
            <person name="Howe K.L."/>
            <person name="Woodfine K."/>
            <person name="Spencer C.C.A."/>
            <person name="Jones M.C."/>
            <person name="Gillson C."/>
            <person name="Searle S."/>
            <person name="Zhou Y."/>
            <person name="Kokocinski F."/>
            <person name="McDonald L."/>
            <person name="Evans R."/>
            <person name="Phillips K."/>
            <person name="Atkinson A."/>
            <person name="Cooper R."/>
            <person name="Jones C."/>
            <person name="Hall R.E."/>
            <person name="Andrews T.D."/>
            <person name="Lloyd C."/>
            <person name="Ainscough R."/>
            <person name="Almeida J.P."/>
            <person name="Ambrose K.D."/>
            <person name="Anderson F."/>
            <person name="Andrew R.W."/>
            <person name="Ashwell R.I.S."/>
            <person name="Aubin K."/>
            <person name="Babbage A.K."/>
            <person name="Bagguley C.L."/>
            <person name="Bailey J."/>
            <person name="Beasley H."/>
            <person name="Bethel G."/>
            <person name="Bird C.P."/>
            <person name="Bray-Allen S."/>
            <person name="Brown J.Y."/>
            <person name="Brown A.J."/>
            <person name="Buckley D."/>
            <person name="Burton J."/>
            <person name="Bye J."/>
            <person name="Carder C."/>
            <person name="Chapman J.C."/>
            <person name="Clark S.Y."/>
            <person name="Clarke G."/>
            <person name="Clee C."/>
            <person name="Cobley V."/>
            <person name="Collier R.E."/>
            <person name="Corby N."/>
            <person name="Coville G.J."/>
            <person name="Davies J."/>
            <person name="Deadman R."/>
            <person name="Dunn M."/>
            <person name="Earthrowl M."/>
            <person name="Ellington A.G."/>
            <person name="Errington H."/>
            <person name="Frankish A."/>
            <person name="Frankland J."/>
            <person name="French L."/>
            <person name="Garner P."/>
            <person name="Garnett J."/>
            <person name="Gay L."/>
            <person name="Ghori M.R.J."/>
            <person name="Gibson R."/>
            <person name="Gilby L.M."/>
            <person name="Gillett W."/>
            <person name="Glithero R.J."/>
            <person name="Grafham D.V."/>
            <person name="Griffiths C."/>
            <person name="Griffiths-Jones S."/>
            <person name="Grocock R."/>
            <person name="Hammond S."/>
            <person name="Harrison E.S.I."/>
            <person name="Hart E."/>
            <person name="Haugen E."/>
            <person name="Heath P.D."/>
            <person name="Holmes S."/>
            <person name="Holt K."/>
            <person name="Howden P.J."/>
            <person name="Hunt A.R."/>
            <person name="Hunt S.E."/>
            <person name="Hunter G."/>
            <person name="Isherwood J."/>
            <person name="James R."/>
            <person name="Johnson C."/>
            <person name="Johnson D."/>
            <person name="Joy A."/>
            <person name="Kay M."/>
            <person name="Kershaw J.K."/>
            <person name="Kibukawa M."/>
            <person name="Kimberley A.M."/>
            <person name="King A."/>
            <person name="Knights A.J."/>
            <person name="Lad H."/>
            <person name="Laird G."/>
            <person name="Lawlor S."/>
            <person name="Leongamornlert D.A."/>
            <person name="Lloyd D.M."/>
            <person name="Loveland J."/>
            <person name="Lovell J."/>
            <person name="Lush M.J."/>
            <person name="Lyne R."/>
            <person name="Martin S."/>
            <person name="Mashreghi-Mohammadi M."/>
            <person name="Matthews L."/>
            <person name="Matthews N.S.W."/>
            <person name="McLaren S."/>
            <person name="Milne S."/>
            <person name="Mistry S."/>
            <person name="Moore M.J.F."/>
            <person name="Nickerson T."/>
            <person name="O'Dell C.N."/>
            <person name="Oliver K."/>
            <person name="Palmeiri A."/>
            <person name="Palmer S.A."/>
            <person name="Parker A."/>
            <person name="Patel D."/>
            <person name="Pearce A.V."/>
            <person name="Peck A.I."/>
            <person name="Pelan S."/>
            <person name="Phelps K."/>
            <person name="Phillimore B.J."/>
            <person name="Plumb R."/>
            <person name="Rajan J."/>
            <person name="Raymond C."/>
            <person name="Rouse G."/>
            <person name="Saenphimmachak C."/>
            <person name="Sehra H.K."/>
            <person name="Sheridan E."/>
            <person name="Shownkeen R."/>
            <person name="Sims S."/>
            <person name="Skuce C.D."/>
            <person name="Smith M."/>
            <person name="Steward C."/>
            <person name="Subramanian S."/>
            <person name="Sycamore N."/>
            <person name="Tracey A."/>
            <person name="Tromans A."/>
            <person name="Van Helmond Z."/>
            <person name="Wall M."/>
            <person name="Wallis J.M."/>
            <person name="White S."/>
            <person name="Whitehead S.L."/>
            <person name="Wilkinson J.E."/>
            <person name="Willey D.L."/>
            <person name="Williams H."/>
            <person name="Wilming L."/>
            <person name="Wray P.W."/>
            <person name="Wu Z."/>
            <person name="Coulson A."/>
            <person name="Vaudin M."/>
            <person name="Sulston J.E."/>
            <person name="Durbin R.M."/>
            <person name="Hubbard T."/>
            <person name="Wooster R."/>
            <person name="Dunham I."/>
            <person name="Carter N.P."/>
            <person name="McVean G."/>
            <person name="Ross M.T."/>
            <person name="Harrow J."/>
            <person name="Olson M.V."/>
            <person name="Beck S."/>
            <person name="Rogers J."/>
            <person name="Bentley D.R."/>
        </authorList>
    </citation>
    <scope>NUCLEOTIDE SEQUENCE [LARGE SCALE GENOMIC DNA]</scope>
</reference>
<reference key="10">
    <citation type="journal article" date="2004" name="Genome Res.">
        <title>The status, quality, and expansion of the NIH full-length cDNA project: the Mammalian Gene Collection (MGC).</title>
        <authorList>
            <consortium name="The MGC Project Team"/>
        </authorList>
    </citation>
    <scope>NUCLEOTIDE SEQUENCE [LARGE SCALE MRNA]</scope>
    <source>
        <tissue>Skin</tissue>
        <tissue>Testis</tissue>
        <tissue>Uterus</tissue>
    </source>
</reference>
<reference key="11">
    <citation type="journal article" date="1987" name="Biochem. Soc. Trans.">
        <title>Partial nucleotide sequence of a cloned cDNA for human liver microsomal epoxide hydrolase.</title>
        <authorList>
            <person name="Craft J.A."/>
            <person name="Jackson M.R."/>
            <person name="Burchell B."/>
        </authorList>
    </citation>
    <scope>NUCLEOTIDE SEQUENCE [MRNA] OF 9-327</scope>
    <source>
        <tissue>Liver</tissue>
    </source>
</reference>
<reference key="12">
    <citation type="journal article" date="2000" name="Hum. Mutat.">
        <title>Identification of 6 new polymorphisms, g.11177G&gt;A, g.14622C&gt;T (R49C), g.17540T&gt;C, g.17639T&gt;C, g.30929T&gt;C, g.31074G&gt;A (R454Q), in the human microsomal epoxide hydrolase gene (EPHX1) in a French population.</title>
        <authorList>
            <person name="Belmahdi F."/>
            <person name="Chevalier D."/>
            <person name="Lo-Guidice J.-M."/>
            <person name="Allorge D."/>
            <person name="Cauffiez C."/>
            <person name="Lafitte J.-J."/>
            <person name="Broly F."/>
        </authorList>
    </citation>
    <scope>NUCLEOTIDE SEQUENCE [GENOMIC DNA] OF 1-197; 242-310 AND 348-455</scope>
    <scope>VARIANTS CYS-49; HIS-113; ARG-139; PRO-260 AND GLN-454</scope>
</reference>
<reference key="13">
    <citation type="journal article" date="2003" name="Biochim. Biophys. Acta">
        <title>Inhibition of human m-epoxide hydrolase gene expression in a case of hypercholanemia.</title>
        <authorList>
            <person name="Zhu Q.S."/>
            <person name="Xing W."/>
            <person name="Qian B."/>
            <person name="von Dippe P."/>
            <person name="Shneider B.L."/>
            <person name="Fox V.L."/>
            <person name="Levy D."/>
        </authorList>
    </citation>
    <scope>POTENTIAL INVOLVEMENT IN HYPERCHOLANEMIA</scope>
    <scope>TISSUE SPECIFICITY</scope>
</reference>
<reference key="14">
    <citation type="journal article" date="2011" name="BMC Syst. Biol.">
        <title>Initial characterization of the human central proteome.</title>
        <authorList>
            <person name="Burkard T.R."/>
            <person name="Planyavsky M."/>
            <person name="Kaupe I."/>
            <person name="Breitwieser F.P."/>
            <person name="Buerckstuemmer T."/>
            <person name="Bennett K.L."/>
            <person name="Superti-Furga G."/>
            <person name="Colinge J."/>
        </authorList>
    </citation>
    <scope>IDENTIFICATION BY MASS SPECTROMETRY [LARGE SCALE ANALYSIS]</scope>
</reference>
<reference key="15">
    <citation type="journal article" date="2012" name="J. Lipid Res.">
        <title>EH3 (ABHD9): the first member of a new epoxide hydrolase family with high activity for fatty acid epoxides.</title>
        <authorList>
            <person name="Decker M."/>
            <person name="Adamska M."/>
            <person name="Cronin A."/>
            <person name="Di Giallonardo F."/>
            <person name="Burgener J."/>
            <person name="Marowsky A."/>
            <person name="Falck J.R."/>
            <person name="Morisseau C."/>
            <person name="Hammock B.D."/>
            <person name="Gruzdev A."/>
            <person name="Zeldin D.C."/>
            <person name="Arand M."/>
        </authorList>
    </citation>
    <scope>FUNCTION</scope>
    <scope>CATALYTIC ACTIVITY</scope>
    <scope>BIOPHYSICOCHEMICAL PROPERTIES</scope>
</reference>
<reference key="16">
    <citation type="journal article" date="2014" name="J. Lipid Res.">
        <title>A novel activity of microsomal epoxide hydrolase: metabolism of the endocannabinoid 2-arachidonoylglycerol.</title>
        <authorList>
            <person name="Nithipatikom K."/>
            <person name="Endsley M.P."/>
            <person name="Pfeiffer A.W."/>
            <person name="Falck J.R."/>
            <person name="Campbell W.B."/>
        </authorList>
    </citation>
    <scope>FUNCTION</scope>
    <scope>CATALYTIC ACTIVITY</scope>
    <scope>ACTIVITY REGULATION</scope>
    <scope>SUBCELLULAR LOCATION</scope>
</reference>
<reference key="17">
    <citation type="journal article" date="2014" name="J. Proteomics">
        <title>An enzyme assisted RP-RPLC approach for in-depth analysis of human liver phosphoproteome.</title>
        <authorList>
            <person name="Bian Y."/>
            <person name="Song C."/>
            <person name="Cheng K."/>
            <person name="Dong M."/>
            <person name="Wang F."/>
            <person name="Huang J."/>
            <person name="Sun D."/>
            <person name="Wang L."/>
            <person name="Ye M."/>
            <person name="Zou H."/>
        </authorList>
    </citation>
    <scope>IDENTIFICATION BY MASS SPECTROMETRY [LARGE SCALE ANALYSIS]</scope>
    <source>
        <tissue>Liver</tissue>
    </source>
</reference>
<reference key="18">
    <citation type="journal article" date="2015" name="Proteomics">
        <title>N-terminome analysis of the human mitochondrial proteome.</title>
        <authorList>
            <person name="Vaca Jacome A.S."/>
            <person name="Rabilloud T."/>
            <person name="Schaeffer-Reiss C."/>
            <person name="Rompais M."/>
            <person name="Ayoub D."/>
            <person name="Lane L."/>
            <person name="Bairoch A."/>
            <person name="Van Dorsselaer A."/>
            <person name="Carapito C."/>
        </authorList>
    </citation>
    <scope>IDENTIFICATION BY MASS SPECTROMETRY [LARGE SCALE ANALYSIS]</scope>
</reference>
<reference key="19">
    <citation type="journal article" date="2002" name="Eur. J. Hum. Genet.">
        <title>Two exonic single nucleotide polymorphisms in the microsomal epoxide hydrolase gene are jointly associated with preeclampsia.</title>
        <authorList>
            <person name="Laasanen J."/>
            <person name="Romppanen E.-L."/>
            <person name="Hiltunen M."/>
            <person name="Helisalmi S."/>
            <person name="Mannermaa A."/>
            <person name="Punnonen K."/>
            <person name="Heinonen S."/>
        </authorList>
    </citation>
    <scope>VARIANTS HIS-113 AND ARG-139</scope>
    <scope>DISEASE</scope>
</reference>
<reference key="20">
    <citation type="journal article" date="2003" name="Drug Metab. Pharmacokinet.">
        <title>Five novel single nucleotide polymorphisms in the EPHX1 gene encoding microsomal epoxide hydrolase.</title>
        <authorList>
            <person name="Shiseki K."/>
            <person name="Itoda M."/>
            <person name="Saito Y."/>
            <person name="Nakajima Y."/>
            <person name="Maekawa K."/>
            <person name="Kimura H."/>
            <person name="Goto Y."/>
            <person name="Saitoh O."/>
            <person name="Katoh M."/>
            <person name="Ohnuma T."/>
            <person name="Kawai M."/>
            <person name="Sugai K."/>
            <person name="Ohtsuki T."/>
            <person name="Suzuki C."/>
            <person name="Minami N."/>
            <person name="Ozawa S."/>
            <person name="Sawada J."/>
        </authorList>
    </citation>
    <scope>VARIANT GLN-44</scope>
</reference>
<reference key="21">
    <citation type="journal article" date="2004" name="Chem. Biol. Interact.">
        <title>Functional analysis of human microsomal epoxide hydrolase genetic variants.</title>
        <authorList>
            <person name="Hosagrahara V.P."/>
            <person name="Rettie A.E."/>
            <person name="Hassett C."/>
            <person name="Omiecinski C.J."/>
        </authorList>
    </citation>
    <scope>CHARACTERIZATION OF VARIANTS HIS-113 AND ARG-139</scope>
</reference>
<protein>
    <recommendedName>
        <fullName evidence="14">Epoxide hydrolase 1</fullName>
        <ecNumber evidence="1">3.3.2.9</ecNumber>
    </recommendedName>
    <alternativeName>
        <fullName>Epoxide hydratase</fullName>
    </alternativeName>
    <alternativeName>
        <fullName>Microsomal epoxide hydrolase</fullName>
        <shortName evidence="14">mEH</shortName>
    </alternativeName>
</protein>
<gene>
    <name evidence="15" type="primary">EPHX1</name>
    <name type="synonym">EPHX</name>
    <name type="synonym">EPOX</name>
</gene>